<sequence length="79" mass="9302">MEFPKALIKRPNYHFEYPHKRKDKRIGRGFSIGELEKAGLNINNARKLGIIVDIRRKSVHEENVEVLKKFLEQLSNQKS</sequence>
<organism>
    <name type="scientific">Saccharolobus islandicus (strain Y.G.57.14 / Yellowstone #1)</name>
    <name type="common">Sulfolobus islandicus</name>
    <dbReference type="NCBI Taxonomy" id="439386"/>
    <lineage>
        <taxon>Archaea</taxon>
        <taxon>Thermoproteota</taxon>
        <taxon>Thermoprotei</taxon>
        <taxon>Sulfolobales</taxon>
        <taxon>Sulfolobaceae</taxon>
        <taxon>Saccharolobus</taxon>
    </lineage>
</organism>
<comment type="similarity">
    <text evidence="1">Belongs to the eukaryotic ribosomal protein eL13 family.</text>
</comment>
<feature type="chain" id="PRO_1000206488" description="Large ribosomal subunit protein eL13">
    <location>
        <begin position="1"/>
        <end position="79"/>
    </location>
</feature>
<reference key="1">
    <citation type="journal article" date="2009" name="Proc. Natl. Acad. Sci. U.S.A.">
        <title>Biogeography of the Sulfolobus islandicus pan-genome.</title>
        <authorList>
            <person name="Reno M.L."/>
            <person name="Held N.L."/>
            <person name="Fields C.J."/>
            <person name="Burke P.V."/>
            <person name="Whitaker R.J."/>
        </authorList>
    </citation>
    <scope>NUCLEOTIDE SEQUENCE [LARGE SCALE GENOMIC DNA]</scope>
    <source>
        <strain>Y.G.57.14 / Yellowstone #1</strain>
    </source>
</reference>
<keyword id="KW-0687">Ribonucleoprotein</keyword>
<keyword id="KW-0689">Ribosomal protein</keyword>
<dbReference type="EMBL" id="CP001403">
    <property type="protein sequence ID" value="ACP44530.1"/>
    <property type="molecule type" value="Genomic_DNA"/>
</dbReference>
<dbReference type="RefSeq" id="WP_012710410.1">
    <property type="nucleotide sequence ID" value="NC_012622.1"/>
</dbReference>
<dbReference type="SMR" id="C3N968"/>
<dbReference type="KEGG" id="siy:YG5714_0237"/>
<dbReference type="HOGENOM" id="CLU_179008_0_0_2"/>
<dbReference type="Proteomes" id="UP000002308">
    <property type="component" value="Chromosome"/>
</dbReference>
<dbReference type="GO" id="GO:1990904">
    <property type="term" value="C:ribonucleoprotein complex"/>
    <property type="evidence" value="ECO:0007669"/>
    <property type="project" value="UniProtKB-KW"/>
</dbReference>
<dbReference type="GO" id="GO:0005840">
    <property type="term" value="C:ribosome"/>
    <property type="evidence" value="ECO:0007669"/>
    <property type="project" value="UniProtKB-KW"/>
</dbReference>
<dbReference type="GO" id="GO:0003735">
    <property type="term" value="F:structural constituent of ribosome"/>
    <property type="evidence" value="ECO:0007669"/>
    <property type="project" value="InterPro"/>
</dbReference>
<dbReference type="GO" id="GO:0006412">
    <property type="term" value="P:translation"/>
    <property type="evidence" value="ECO:0007669"/>
    <property type="project" value="UniProtKB-UniRule"/>
</dbReference>
<dbReference type="HAMAP" id="MF_00499">
    <property type="entry name" value="Ribosomal_eL13"/>
    <property type="match status" value="1"/>
</dbReference>
<dbReference type="InterPro" id="IPR001380">
    <property type="entry name" value="Ribosomal_eL13"/>
</dbReference>
<dbReference type="NCBIfam" id="NF008914">
    <property type="entry name" value="PRK12277.1"/>
    <property type="match status" value="1"/>
</dbReference>
<dbReference type="Pfam" id="PF01294">
    <property type="entry name" value="Ribosomal_L13e"/>
    <property type="match status" value="1"/>
</dbReference>
<gene>
    <name evidence="1" type="primary">rpl13e</name>
    <name type="ordered locus">YG5714_0237</name>
</gene>
<evidence type="ECO:0000255" key="1">
    <source>
        <dbReference type="HAMAP-Rule" id="MF_00499"/>
    </source>
</evidence>
<evidence type="ECO:0000305" key="2"/>
<proteinExistence type="inferred from homology"/>
<name>RL13E_SACI7</name>
<accession>C3N968</accession>
<protein>
    <recommendedName>
        <fullName evidence="1">Large ribosomal subunit protein eL13</fullName>
    </recommendedName>
    <alternativeName>
        <fullName evidence="2">50S ribosomal protein L13e</fullName>
    </alternativeName>
</protein>